<organism>
    <name type="scientific">Mycoplasma pneumoniae (strain ATCC 29342 / M129 / Subtype 1)</name>
    <name type="common">Mycoplasmoides pneumoniae</name>
    <dbReference type="NCBI Taxonomy" id="272634"/>
    <lineage>
        <taxon>Bacteria</taxon>
        <taxon>Bacillati</taxon>
        <taxon>Mycoplasmatota</taxon>
        <taxon>Mycoplasmoidales</taxon>
        <taxon>Mycoplasmoidaceae</taxon>
        <taxon>Mycoplasmoides</taxon>
    </lineage>
</organism>
<feature type="chain" id="PRO_0000215247" description="Uncharacterized protein MPN_035">
    <location>
        <begin position="1"/>
        <end position="666"/>
    </location>
</feature>
<keyword id="KW-1185">Reference proteome</keyword>
<reference key="1">
    <citation type="journal article" date="1996" name="Nucleic Acids Res.">
        <title>Complete sequence analysis of the genome of the bacterium Mycoplasma pneumoniae.</title>
        <authorList>
            <person name="Himmelreich R."/>
            <person name="Hilbert H."/>
            <person name="Plagens H."/>
            <person name="Pirkl E."/>
            <person name="Li B.-C."/>
            <person name="Herrmann R."/>
        </authorList>
    </citation>
    <scope>NUCLEOTIDE SEQUENCE [LARGE SCALE GENOMIC DNA]</scope>
    <source>
        <strain>ATCC 29342 / M129 / Subtype 1</strain>
    </source>
</reference>
<evidence type="ECO:0000305" key="1"/>
<sequence>MKAFRKLLLGLALPTTIGPLLGLLLTNTDTVKNESLTTVRHRSSINQDFDGIFHTVKLLEPIQQSNADPAASFALFQQKFPNLKRVANSTLNTFDVYNLLSGWKSSLTAYLNQVLALQQRIKAADQIFPNQKETLPKDENPNIFEVLGAYGGKGFFPTLGSNGLHLPPQLFQFFRDFQLSSFTIKDFEVALVSEPDIVQHDKVRYAFQVQFNLVLQLQINRNPVLFDFNLQLKTNNFANQTSFDELFNEKTNPLNWQFFSKLKVNHLVYEGNDITQLANTLLQSQFNVLQLDLNKSIYRLNLNAMAQRFEHDWVQPLYAKRTQAKIAYEAEQARIAAENKRKELERQKLLAELKAKAEHYQKIKQARENMLKGLKSITDFVKFWKSPDRLLVGFNKQDDITTRAGVYKALQIAYANYPQWTFYLTLQGWKNGSELLLKRPSWTNLLSDIHFQKAFNLKNTVSEQTLGAATLPGYGYYGLRMSDWLRWALGYYSYIHMGVPQNVQTKFTGTPDNEQQVWIANEPFEWNKHYGVGPKYKDKAYRFNMEISFELEGWIAVKWWAWAFKGSIPGNWKGKLKVTHLFDGMVPVWELGPVNTHLPQYSFTDQQQLLFVPHSIQKIEAIGADKGINDLLKTQNLHNLERLSYESTNPIDLISYLLYAIQYIKV</sequence>
<dbReference type="EMBL" id="U00089">
    <property type="protein sequence ID" value="AAB95767.1"/>
    <property type="molecule type" value="Genomic_DNA"/>
</dbReference>
<dbReference type="PIR" id="S73445">
    <property type="entry name" value="S73445"/>
</dbReference>
<dbReference type="RefSeq" id="NP_109723.1">
    <property type="nucleotide sequence ID" value="NC_000912.1"/>
</dbReference>
<dbReference type="RefSeq" id="WP_010874392.1">
    <property type="nucleotide sequence ID" value="NZ_OU342337.1"/>
</dbReference>
<dbReference type="SMR" id="P75079"/>
<dbReference type="STRING" id="272634.MPN_035"/>
<dbReference type="EnsemblBacteria" id="AAB95767">
    <property type="protein sequence ID" value="AAB95767"/>
    <property type="gene ID" value="MPN_035"/>
</dbReference>
<dbReference type="KEGG" id="mpn:MPN_035"/>
<dbReference type="PATRIC" id="fig|272634.6.peg.34"/>
<dbReference type="HOGENOM" id="CLU_412083_0_0_14"/>
<dbReference type="OrthoDB" id="394965at2"/>
<dbReference type="BioCyc" id="MPNE272634:G1GJ3-50-MONOMER"/>
<dbReference type="Proteomes" id="UP000000808">
    <property type="component" value="Chromosome"/>
</dbReference>
<dbReference type="InterPro" id="IPR004306">
    <property type="entry name" value="DUF237"/>
</dbReference>
<dbReference type="InterPro" id="IPR004319">
    <property type="entry name" value="DUF240"/>
</dbReference>
<dbReference type="Pfam" id="PF03072">
    <property type="entry name" value="DUF237"/>
    <property type="match status" value="1"/>
</dbReference>
<dbReference type="Pfam" id="PF03086">
    <property type="entry name" value="DUF240"/>
    <property type="match status" value="1"/>
</dbReference>
<protein>
    <recommendedName>
        <fullName>Uncharacterized protein MPN_035</fullName>
    </recommendedName>
</protein>
<proteinExistence type="inferred from homology"/>
<name>Y035_MYCPN</name>
<accession>P75079</accession>
<gene>
    <name type="ordered locus">MPN_035</name>
    <name type="ORF">B01_orf666</name>
    <name type="ORF">MP119</name>
</gene>
<comment type="similarity">
    <text evidence="1">Belongs to the MG032/MG096/MG288 family.</text>
</comment>